<gene>
    <name evidence="1" type="primary">rhaA</name>
    <name type="ordered locus">KPK_5468</name>
</gene>
<name>RHAA_KLEP3</name>
<evidence type="ECO:0000255" key="1">
    <source>
        <dbReference type="HAMAP-Rule" id="MF_00541"/>
    </source>
</evidence>
<accession>B5XZ52</accession>
<comment type="function">
    <text evidence="1">Catalyzes the interconversion of L-rhamnose and L-rhamnulose.</text>
</comment>
<comment type="catalytic activity">
    <reaction evidence="1">
        <text>L-rhamnopyranose = L-rhamnulose</text>
        <dbReference type="Rhea" id="RHEA:23160"/>
        <dbReference type="ChEBI" id="CHEBI:17897"/>
        <dbReference type="ChEBI" id="CHEBI:62346"/>
        <dbReference type="EC" id="5.3.1.14"/>
    </reaction>
</comment>
<comment type="cofactor">
    <cofactor evidence="1">
        <name>Mn(2+)</name>
        <dbReference type="ChEBI" id="CHEBI:29035"/>
    </cofactor>
    <text evidence="1">Binds 1 Mn(2+) ion per subunit.</text>
</comment>
<comment type="pathway">
    <text evidence="1">Carbohydrate degradation; L-rhamnose degradation; glycerone phosphate from L-rhamnose: step 1/3.</text>
</comment>
<comment type="subunit">
    <text evidence="1">Homotetramer.</text>
</comment>
<comment type="subcellular location">
    <subcellularLocation>
        <location evidence="1">Cytoplasm</location>
    </subcellularLocation>
</comment>
<comment type="similarity">
    <text evidence="1">Belongs to the rhamnose isomerase family.</text>
</comment>
<dbReference type="EC" id="5.3.1.14" evidence="1"/>
<dbReference type="EMBL" id="CP000964">
    <property type="protein sequence ID" value="ACI08591.1"/>
    <property type="molecule type" value="Genomic_DNA"/>
</dbReference>
<dbReference type="SMR" id="B5XZ52"/>
<dbReference type="KEGG" id="kpe:KPK_5468"/>
<dbReference type="HOGENOM" id="CLU_052790_0_0_6"/>
<dbReference type="UniPathway" id="UPA00541">
    <property type="reaction ID" value="UER00601"/>
</dbReference>
<dbReference type="Proteomes" id="UP000001734">
    <property type="component" value="Chromosome"/>
</dbReference>
<dbReference type="GO" id="GO:0005737">
    <property type="term" value="C:cytoplasm"/>
    <property type="evidence" value="ECO:0007669"/>
    <property type="project" value="UniProtKB-SubCell"/>
</dbReference>
<dbReference type="GO" id="GO:0008740">
    <property type="term" value="F:L-rhamnose isomerase activity"/>
    <property type="evidence" value="ECO:0007669"/>
    <property type="project" value="UniProtKB-UniRule"/>
</dbReference>
<dbReference type="GO" id="GO:0030145">
    <property type="term" value="F:manganese ion binding"/>
    <property type="evidence" value="ECO:0007669"/>
    <property type="project" value="UniProtKB-UniRule"/>
</dbReference>
<dbReference type="GO" id="GO:0019324">
    <property type="term" value="P:L-lyxose metabolic process"/>
    <property type="evidence" value="ECO:0007669"/>
    <property type="project" value="TreeGrafter"/>
</dbReference>
<dbReference type="GO" id="GO:0019301">
    <property type="term" value="P:rhamnose catabolic process"/>
    <property type="evidence" value="ECO:0007669"/>
    <property type="project" value="UniProtKB-UniRule"/>
</dbReference>
<dbReference type="FunFam" id="3.20.20.150:FF:000006">
    <property type="entry name" value="L-rhamnose isomerase"/>
    <property type="match status" value="1"/>
</dbReference>
<dbReference type="Gene3D" id="3.20.20.150">
    <property type="entry name" value="Divalent-metal-dependent TIM barrel enzymes"/>
    <property type="match status" value="1"/>
</dbReference>
<dbReference type="HAMAP" id="MF_00541">
    <property type="entry name" value="RhaA"/>
    <property type="match status" value="1"/>
</dbReference>
<dbReference type="InterPro" id="IPR050337">
    <property type="entry name" value="L-rhamnose_isomerase"/>
</dbReference>
<dbReference type="InterPro" id="IPR009308">
    <property type="entry name" value="Rhamnose_isomerase"/>
</dbReference>
<dbReference type="InterPro" id="IPR036237">
    <property type="entry name" value="Xyl_isomerase-like_sf"/>
</dbReference>
<dbReference type="NCBIfam" id="NF002203">
    <property type="entry name" value="PRK01076.1"/>
    <property type="match status" value="1"/>
</dbReference>
<dbReference type="NCBIfam" id="TIGR01748">
    <property type="entry name" value="rhaA"/>
    <property type="match status" value="1"/>
</dbReference>
<dbReference type="PANTHER" id="PTHR30268">
    <property type="entry name" value="L-RHAMNOSE ISOMERASE"/>
    <property type="match status" value="1"/>
</dbReference>
<dbReference type="PANTHER" id="PTHR30268:SF0">
    <property type="entry name" value="L-RHAMNOSE ISOMERASE"/>
    <property type="match status" value="1"/>
</dbReference>
<dbReference type="Pfam" id="PF06134">
    <property type="entry name" value="RhaA"/>
    <property type="match status" value="1"/>
</dbReference>
<dbReference type="SUPFAM" id="SSF51658">
    <property type="entry name" value="Xylose isomerase-like"/>
    <property type="match status" value="1"/>
</dbReference>
<proteinExistence type="inferred from homology"/>
<protein>
    <recommendedName>
        <fullName evidence="1">L-rhamnose isomerase</fullName>
        <ecNumber evidence="1">5.3.1.14</ecNumber>
    </recommendedName>
</protein>
<organism>
    <name type="scientific">Klebsiella pneumoniae (strain 342)</name>
    <dbReference type="NCBI Taxonomy" id="507522"/>
    <lineage>
        <taxon>Bacteria</taxon>
        <taxon>Pseudomonadati</taxon>
        <taxon>Pseudomonadota</taxon>
        <taxon>Gammaproteobacteria</taxon>
        <taxon>Enterobacterales</taxon>
        <taxon>Enterobacteriaceae</taxon>
        <taxon>Klebsiella/Raoultella group</taxon>
        <taxon>Klebsiella</taxon>
        <taxon>Klebsiella pneumoniae complex</taxon>
    </lineage>
</organism>
<keyword id="KW-0963">Cytoplasm</keyword>
<keyword id="KW-0413">Isomerase</keyword>
<keyword id="KW-0464">Manganese</keyword>
<keyword id="KW-0479">Metal-binding</keyword>
<keyword id="KW-0684">Rhamnose metabolism</keyword>
<reference key="1">
    <citation type="journal article" date="2008" name="PLoS Genet.">
        <title>Complete genome sequence of the N2-fixing broad host range endophyte Klebsiella pneumoniae 342 and virulence predictions verified in mice.</title>
        <authorList>
            <person name="Fouts D.E."/>
            <person name="Tyler H.L."/>
            <person name="DeBoy R.T."/>
            <person name="Daugherty S."/>
            <person name="Ren Q."/>
            <person name="Badger J.H."/>
            <person name="Durkin A.S."/>
            <person name="Huot H."/>
            <person name="Shrivastava S."/>
            <person name="Kothari S."/>
            <person name="Dodson R.J."/>
            <person name="Mohamoud Y."/>
            <person name="Khouri H."/>
            <person name="Roesch L.F.W."/>
            <person name="Krogfelt K.A."/>
            <person name="Struve C."/>
            <person name="Triplett E.W."/>
            <person name="Methe B.A."/>
        </authorList>
    </citation>
    <scope>NUCLEOTIDE SEQUENCE [LARGE SCALE GENOMIC DNA]</scope>
    <source>
        <strain>342</strain>
    </source>
</reference>
<feature type="chain" id="PRO_1000128885" description="L-rhamnose isomerase">
    <location>
        <begin position="1"/>
        <end position="419"/>
    </location>
</feature>
<feature type="binding site" evidence="1">
    <location>
        <position position="262"/>
    </location>
    <ligand>
        <name>Mn(2+)</name>
        <dbReference type="ChEBI" id="CHEBI:29035"/>
    </ligand>
</feature>
<feature type="binding site" evidence="1">
    <location>
        <position position="294"/>
    </location>
    <ligand>
        <name>Mn(2+)</name>
        <dbReference type="ChEBI" id="CHEBI:29035"/>
    </ligand>
</feature>
<feature type="binding site" evidence="1">
    <location>
        <position position="296"/>
    </location>
    <ligand>
        <name>Mn(2+)</name>
        <dbReference type="ChEBI" id="CHEBI:29035"/>
    </ligand>
</feature>
<sequence>MTTQLEQAWEIAKQRYAAVGVDVEEALRQLDRLPVSMHCWQGDDVAGFENPAGSLTGGIQATGNYPGKARNAEELRADLEQALSLIPGPKRLNLHAIYLESDAPVARNEIKPEHFKNWVTWAKANKLGLDFNPSCFSHPLSADGFTLSHANDEIRQFWIDHCKASRRVSAYFGEQLGTPSVMNIWVPDGMKDITVDRFAPRQRLLNALDEVISEKLDPAHHIDAVESKLFGIGAESYTVGSNEFYMGYATSRQTALCLDAGHFHPTEVISDKISAAMLYIPRLLLHVSRPVRWDSDHVVLLDDETQAIASEIIRHNLFDRVHIGLDFFDASINRIAAWVIGTRNMKKALLRALLEPTAQLRQLENDGDYTARLALLEEQKSLPWQAIWEMYCQRHDTPAGSQWLDNVRAYENAVLSQRG</sequence>